<protein>
    <recommendedName>
        <fullName evidence="1">Thymidylate kinase</fullName>
        <ecNumber evidence="1">2.7.4.9</ecNumber>
    </recommendedName>
    <alternativeName>
        <fullName evidence="1">dTMP kinase</fullName>
    </alternativeName>
</protein>
<gene>
    <name evidence="1" type="primary">tmk</name>
    <name type="ordered locus">Paes_1460</name>
</gene>
<organism>
    <name type="scientific">Prosthecochloris aestuarii (strain DSM 271 / SK 413)</name>
    <dbReference type="NCBI Taxonomy" id="290512"/>
    <lineage>
        <taxon>Bacteria</taxon>
        <taxon>Pseudomonadati</taxon>
        <taxon>Chlorobiota</taxon>
        <taxon>Chlorobiia</taxon>
        <taxon>Chlorobiales</taxon>
        <taxon>Chlorobiaceae</taxon>
        <taxon>Prosthecochloris</taxon>
    </lineage>
</organism>
<keyword id="KW-0067">ATP-binding</keyword>
<keyword id="KW-0418">Kinase</keyword>
<keyword id="KW-0545">Nucleotide biosynthesis</keyword>
<keyword id="KW-0547">Nucleotide-binding</keyword>
<keyword id="KW-0808">Transferase</keyword>
<reference key="1">
    <citation type="submission" date="2008-06" db="EMBL/GenBank/DDBJ databases">
        <title>Complete sequence of chromosome of Prosthecochloris aestuarii DSM 271.</title>
        <authorList>
            <consortium name="US DOE Joint Genome Institute"/>
            <person name="Lucas S."/>
            <person name="Copeland A."/>
            <person name="Lapidus A."/>
            <person name="Glavina del Rio T."/>
            <person name="Dalin E."/>
            <person name="Tice H."/>
            <person name="Bruce D."/>
            <person name="Goodwin L."/>
            <person name="Pitluck S."/>
            <person name="Schmutz J."/>
            <person name="Larimer F."/>
            <person name="Land M."/>
            <person name="Hauser L."/>
            <person name="Kyrpides N."/>
            <person name="Anderson I."/>
            <person name="Liu Z."/>
            <person name="Li T."/>
            <person name="Zhao F."/>
            <person name="Overmann J."/>
            <person name="Bryant D.A."/>
            <person name="Richardson P."/>
        </authorList>
    </citation>
    <scope>NUCLEOTIDE SEQUENCE [LARGE SCALE GENOMIC DNA]</scope>
    <source>
        <strain>DSM 271 / SK 413</strain>
    </source>
</reference>
<evidence type="ECO:0000255" key="1">
    <source>
        <dbReference type="HAMAP-Rule" id="MF_00165"/>
    </source>
</evidence>
<comment type="function">
    <text evidence="1">Phosphorylation of dTMP to form dTDP in both de novo and salvage pathways of dTTP synthesis.</text>
</comment>
<comment type="catalytic activity">
    <reaction evidence="1">
        <text>dTMP + ATP = dTDP + ADP</text>
        <dbReference type="Rhea" id="RHEA:13517"/>
        <dbReference type="ChEBI" id="CHEBI:30616"/>
        <dbReference type="ChEBI" id="CHEBI:58369"/>
        <dbReference type="ChEBI" id="CHEBI:63528"/>
        <dbReference type="ChEBI" id="CHEBI:456216"/>
        <dbReference type="EC" id="2.7.4.9"/>
    </reaction>
</comment>
<comment type="similarity">
    <text evidence="1">Belongs to the thymidylate kinase family.</text>
</comment>
<dbReference type="EC" id="2.7.4.9" evidence="1"/>
<dbReference type="EMBL" id="CP001108">
    <property type="protein sequence ID" value="ACF46480.1"/>
    <property type="molecule type" value="Genomic_DNA"/>
</dbReference>
<dbReference type="RefSeq" id="WP_012506013.1">
    <property type="nucleotide sequence ID" value="NC_011059.1"/>
</dbReference>
<dbReference type="SMR" id="B4S8U3"/>
<dbReference type="STRING" id="290512.Paes_1460"/>
<dbReference type="KEGG" id="paa:Paes_1460"/>
<dbReference type="eggNOG" id="COG0125">
    <property type="taxonomic scope" value="Bacteria"/>
</dbReference>
<dbReference type="HOGENOM" id="CLU_049131_0_2_10"/>
<dbReference type="Proteomes" id="UP000002725">
    <property type="component" value="Chromosome"/>
</dbReference>
<dbReference type="GO" id="GO:0005829">
    <property type="term" value="C:cytosol"/>
    <property type="evidence" value="ECO:0007669"/>
    <property type="project" value="TreeGrafter"/>
</dbReference>
<dbReference type="GO" id="GO:0005524">
    <property type="term" value="F:ATP binding"/>
    <property type="evidence" value="ECO:0007669"/>
    <property type="project" value="UniProtKB-UniRule"/>
</dbReference>
<dbReference type="GO" id="GO:0004798">
    <property type="term" value="F:dTMP kinase activity"/>
    <property type="evidence" value="ECO:0007669"/>
    <property type="project" value="UniProtKB-UniRule"/>
</dbReference>
<dbReference type="GO" id="GO:0006233">
    <property type="term" value="P:dTDP biosynthetic process"/>
    <property type="evidence" value="ECO:0007669"/>
    <property type="project" value="InterPro"/>
</dbReference>
<dbReference type="GO" id="GO:0006235">
    <property type="term" value="P:dTTP biosynthetic process"/>
    <property type="evidence" value="ECO:0007669"/>
    <property type="project" value="UniProtKB-UniRule"/>
</dbReference>
<dbReference type="GO" id="GO:0006227">
    <property type="term" value="P:dUDP biosynthetic process"/>
    <property type="evidence" value="ECO:0007669"/>
    <property type="project" value="TreeGrafter"/>
</dbReference>
<dbReference type="CDD" id="cd01672">
    <property type="entry name" value="TMPK"/>
    <property type="match status" value="1"/>
</dbReference>
<dbReference type="FunFam" id="3.40.50.300:FF:000225">
    <property type="entry name" value="Thymidylate kinase"/>
    <property type="match status" value="1"/>
</dbReference>
<dbReference type="Gene3D" id="3.40.50.300">
    <property type="entry name" value="P-loop containing nucleotide triphosphate hydrolases"/>
    <property type="match status" value="1"/>
</dbReference>
<dbReference type="HAMAP" id="MF_00165">
    <property type="entry name" value="Thymidylate_kinase"/>
    <property type="match status" value="1"/>
</dbReference>
<dbReference type="InterPro" id="IPR027417">
    <property type="entry name" value="P-loop_NTPase"/>
</dbReference>
<dbReference type="InterPro" id="IPR039430">
    <property type="entry name" value="Thymidylate_kin-like_dom"/>
</dbReference>
<dbReference type="InterPro" id="IPR018095">
    <property type="entry name" value="Thymidylate_kin_CS"/>
</dbReference>
<dbReference type="InterPro" id="IPR018094">
    <property type="entry name" value="Thymidylate_kinase"/>
</dbReference>
<dbReference type="NCBIfam" id="TIGR00041">
    <property type="entry name" value="DTMP_kinase"/>
    <property type="match status" value="1"/>
</dbReference>
<dbReference type="PANTHER" id="PTHR10344">
    <property type="entry name" value="THYMIDYLATE KINASE"/>
    <property type="match status" value="1"/>
</dbReference>
<dbReference type="PANTHER" id="PTHR10344:SF4">
    <property type="entry name" value="UMP-CMP KINASE 2, MITOCHONDRIAL"/>
    <property type="match status" value="1"/>
</dbReference>
<dbReference type="Pfam" id="PF02223">
    <property type="entry name" value="Thymidylate_kin"/>
    <property type="match status" value="1"/>
</dbReference>
<dbReference type="SUPFAM" id="SSF52540">
    <property type="entry name" value="P-loop containing nucleoside triphosphate hydrolases"/>
    <property type="match status" value="1"/>
</dbReference>
<dbReference type="PROSITE" id="PS01331">
    <property type="entry name" value="THYMIDYLATE_KINASE"/>
    <property type="match status" value="1"/>
</dbReference>
<accession>B4S8U3</accession>
<proteinExistence type="inferred from homology"/>
<sequence>MFITFEGIDGAGKSTQVKMLRKLLISKGLEVLTLREPGGTDISESIRDILLEVKNDITPIGELLLFAASRAELVQKVIKPALSDHATVLLDRFYDSTSAYQGYGRGLDLALLHQINRIASCSLEPDITFYLDLSPEDAMIRKFSEKSLPLAFEDEELDRMERSGLEFYTRVRNGYQTIAASQPRRVVTIDATLEPDAIHRKITETIMSRRGSLLQKKEGGVEA</sequence>
<feature type="chain" id="PRO_1000097418" description="Thymidylate kinase">
    <location>
        <begin position="1"/>
        <end position="223"/>
    </location>
</feature>
<feature type="binding site" evidence="1">
    <location>
        <begin position="7"/>
        <end position="14"/>
    </location>
    <ligand>
        <name>ATP</name>
        <dbReference type="ChEBI" id="CHEBI:30616"/>
    </ligand>
</feature>
<name>KTHY_PROA2</name>